<name>DAPB_SYNSC</name>
<organism>
    <name type="scientific">Synechococcus sp. (strain CC9605)</name>
    <dbReference type="NCBI Taxonomy" id="110662"/>
    <lineage>
        <taxon>Bacteria</taxon>
        <taxon>Bacillati</taxon>
        <taxon>Cyanobacteriota</taxon>
        <taxon>Cyanophyceae</taxon>
        <taxon>Synechococcales</taxon>
        <taxon>Synechococcaceae</taxon>
        <taxon>Synechococcus</taxon>
    </lineage>
</organism>
<sequence length="277" mass="28956">MTAPIPVVVAGALGRMGAEVIKAVVGAEDCSLVGAIDNTPGKEGADVGLELGLGELEVAVTADFEGCLCAVSQSVRDSGSGAVLVDFTHPSVVYEHTRAAIAYGVHPVIGTTGLSPEQLNDLTEFSAKASVGGAVIPNFSVGMVLLQQAAAAAARFYDHAELTELHHNRKADAPSGTCIKTAELMEELGKSFNPEEVDEHESLAGCRGGQRDSGLRLHSVRLPGLVAHQEVMFGAPGETYTLRHDTIDRSAYMPGVLLTVRKVGNLGSLVYGLERLI</sequence>
<evidence type="ECO:0000255" key="1">
    <source>
        <dbReference type="HAMAP-Rule" id="MF_00102"/>
    </source>
</evidence>
<evidence type="ECO:0000305" key="2"/>
<gene>
    <name evidence="1" type="primary">dapB</name>
    <name type="ordered locus">Syncc9605_1829</name>
</gene>
<reference key="1">
    <citation type="submission" date="2005-07" db="EMBL/GenBank/DDBJ databases">
        <title>Complete sequence of Synechococcus sp. CC9605.</title>
        <authorList>
            <consortium name="US DOE Joint Genome Institute"/>
            <person name="Copeland A."/>
            <person name="Lucas S."/>
            <person name="Lapidus A."/>
            <person name="Barry K."/>
            <person name="Detter J.C."/>
            <person name="Glavina T."/>
            <person name="Hammon N."/>
            <person name="Israni S."/>
            <person name="Pitluck S."/>
            <person name="Schmutz J."/>
            <person name="Martinez M."/>
            <person name="Larimer F."/>
            <person name="Land M."/>
            <person name="Kyrpides N."/>
            <person name="Ivanova N."/>
            <person name="Richardson P."/>
        </authorList>
    </citation>
    <scope>NUCLEOTIDE SEQUENCE [LARGE SCALE GENOMIC DNA]</scope>
    <source>
        <strain>CC9605</strain>
    </source>
</reference>
<dbReference type="EC" id="1.17.1.8" evidence="1"/>
<dbReference type="EMBL" id="CP000110">
    <property type="protein sequence ID" value="ABB35574.1"/>
    <property type="molecule type" value="Genomic_DNA"/>
</dbReference>
<dbReference type="RefSeq" id="WP_011364783.1">
    <property type="nucleotide sequence ID" value="NC_007516.1"/>
</dbReference>
<dbReference type="SMR" id="Q3AIK8"/>
<dbReference type="STRING" id="110662.Syncc9605_1829"/>
<dbReference type="KEGG" id="syd:Syncc9605_1829"/>
<dbReference type="eggNOG" id="COG0289">
    <property type="taxonomic scope" value="Bacteria"/>
</dbReference>
<dbReference type="HOGENOM" id="CLU_047479_0_1_3"/>
<dbReference type="OrthoDB" id="9790352at2"/>
<dbReference type="UniPathway" id="UPA00034">
    <property type="reaction ID" value="UER00018"/>
</dbReference>
<dbReference type="GO" id="GO:0005829">
    <property type="term" value="C:cytosol"/>
    <property type="evidence" value="ECO:0007669"/>
    <property type="project" value="TreeGrafter"/>
</dbReference>
<dbReference type="GO" id="GO:0008839">
    <property type="term" value="F:4-hydroxy-tetrahydrodipicolinate reductase"/>
    <property type="evidence" value="ECO:0007669"/>
    <property type="project" value="UniProtKB-EC"/>
</dbReference>
<dbReference type="GO" id="GO:0051287">
    <property type="term" value="F:NAD binding"/>
    <property type="evidence" value="ECO:0007669"/>
    <property type="project" value="UniProtKB-UniRule"/>
</dbReference>
<dbReference type="GO" id="GO:0050661">
    <property type="term" value="F:NADP binding"/>
    <property type="evidence" value="ECO:0007669"/>
    <property type="project" value="UniProtKB-UniRule"/>
</dbReference>
<dbReference type="GO" id="GO:0016726">
    <property type="term" value="F:oxidoreductase activity, acting on CH or CH2 groups, NAD or NADP as acceptor"/>
    <property type="evidence" value="ECO:0007669"/>
    <property type="project" value="UniProtKB-UniRule"/>
</dbReference>
<dbReference type="GO" id="GO:0019877">
    <property type="term" value="P:diaminopimelate biosynthetic process"/>
    <property type="evidence" value="ECO:0007669"/>
    <property type="project" value="UniProtKB-UniRule"/>
</dbReference>
<dbReference type="GO" id="GO:0009089">
    <property type="term" value="P:lysine biosynthetic process via diaminopimelate"/>
    <property type="evidence" value="ECO:0007669"/>
    <property type="project" value="UniProtKB-UniRule"/>
</dbReference>
<dbReference type="CDD" id="cd02274">
    <property type="entry name" value="DHDPR_N"/>
    <property type="match status" value="1"/>
</dbReference>
<dbReference type="FunFam" id="3.30.360.10:FF:000009">
    <property type="entry name" value="4-hydroxy-tetrahydrodipicolinate reductase"/>
    <property type="match status" value="1"/>
</dbReference>
<dbReference type="Gene3D" id="3.30.360.10">
    <property type="entry name" value="Dihydrodipicolinate Reductase, domain 2"/>
    <property type="match status" value="1"/>
</dbReference>
<dbReference type="Gene3D" id="3.40.50.720">
    <property type="entry name" value="NAD(P)-binding Rossmann-like Domain"/>
    <property type="match status" value="1"/>
</dbReference>
<dbReference type="HAMAP" id="MF_00102">
    <property type="entry name" value="DapB"/>
    <property type="match status" value="1"/>
</dbReference>
<dbReference type="InterPro" id="IPR022663">
    <property type="entry name" value="DapB_C"/>
</dbReference>
<dbReference type="InterPro" id="IPR000846">
    <property type="entry name" value="DapB_N"/>
</dbReference>
<dbReference type="InterPro" id="IPR022664">
    <property type="entry name" value="DapB_N_CS"/>
</dbReference>
<dbReference type="InterPro" id="IPR023940">
    <property type="entry name" value="DHDPR_bac"/>
</dbReference>
<dbReference type="InterPro" id="IPR036291">
    <property type="entry name" value="NAD(P)-bd_dom_sf"/>
</dbReference>
<dbReference type="NCBIfam" id="TIGR00036">
    <property type="entry name" value="dapB"/>
    <property type="match status" value="1"/>
</dbReference>
<dbReference type="PANTHER" id="PTHR20836:SF0">
    <property type="entry name" value="4-HYDROXY-TETRAHYDRODIPICOLINATE REDUCTASE 1, CHLOROPLASTIC-RELATED"/>
    <property type="match status" value="1"/>
</dbReference>
<dbReference type="PANTHER" id="PTHR20836">
    <property type="entry name" value="DIHYDRODIPICOLINATE REDUCTASE"/>
    <property type="match status" value="1"/>
</dbReference>
<dbReference type="Pfam" id="PF05173">
    <property type="entry name" value="DapB_C"/>
    <property type="match status" value="1"/>
</dbReference>
<dbReference type="Pfam" id="PF01113">
    <property type="entry name" value="DapB_N"/>
    <property type="match status" value="1"/>
</dbReference>
<dbReference type="PIRSF" id="PIRSF000161">
    <property type="entry name" value="DHPR"/>
    <property type="match status" value="1"/>
</dbReference>
<dbReference type="SUPFAM" id="SSF55347">
    <property type="entry name" value="Glyceraldehyde-3-phosphate dehydrogenase-like, C-terminal domain"/>
    <property type="match status" value="1"/>
</dbReference>
<dbReference type="SUPFAM" id="SSF51735">
    <property type="entry name" value="NAD(P)-binding Rossmann-fold domains"/>
    <property type="match status" value="1"/>
</dbReference>
<dbReference type="PROSITE" id="PS01298">
    <property type="entry name" value="DAPB"/>
    <property type="match status" value="1"/>
</dbReference>
<feature type="chain" id="PRO_1000008656" description="4-hydroxy-tetrahydrodipicolinate reductase">
    <location>
        <begin position="1"/>
        <end position="277"/>
    </location>
</feature>
<feature type="active site" description="Proton donor/acceptor" evidence="1">
    <location>
        <position position="166"/>
    </location>
</feature>
<feature type="active site" description="Proton donor" evidence="1">
    <location>
        <position position="170"/>
    </location>
</feature>
<feature type="binding site" evidence="1">
    <location>
        <begin position="11"/>
        <end position="16"/>
    </location>
    <ligand>
        <name>NAD(+)</name>
        <dbReference type="ChEBI" id="CHEBI:57540"/>
    </ligand>
</feature>
<feature type="binding site" evidence="1">
    <location>
        <begin position="110"/>
        <end position="112"/>
    </location>
    <ligand>
        <name>NAD(+)</name>
        <dbReference type="ChEBI" id="CHEBI:57540"/>
    </ligand>
</feature>
<feature type="binding site" evidence="1">
    <location>
        <position position="167"/>
    </location>
    <ligand>
        <name>(S)-2,3,4,5-tetrahydrodipicolinate</name>
        <dbReference type="ChEBI" id="CHEBI:16845"/>
    </ligand>
</feature>
<feature type="binding site" evidence="1">
    <location>
        <begin position="176"/>
        <end position="177"/>
    </location>
    <ligand>
        <name>(S)-2,3,4,5-tetrahydrodipicolinate</name>
        <dbReference type="ChEBI" id="CHEBI:16845"/>
    </ligand>
</feature>
<comment type="function">
    <text evidence="1">Catalyzes the conversion of 4-hydroxy-tetrahydrodipicolinate (HTPA) to tetrahydrodipicolinate.</text>
</comment>
<comment type="catalytic activity">
    <reaction evidence="1">
        <text>(S)-2,3,4,5-tetrahydrodipicolinate + NAD(+) + H2O = (2S,4S)-4-hydroxy-2,3,4,5-tetrahydrodipicolinate + NADH + H(+)</text>
        <dbReference type="Rhea" id="RHEA:35323"/>
        <dbReference type="ChEBI" id="CHEBI:15377"/>
        <dbReference type="ChEBI" id="CHEBI:15378"/>
        <dbReference type="ChEBI" id="CHEBI:16845"/>
        <dbReference type="ChEBI" id="CHEBI:57540"/>
        <dbReference type="ChEBI" id="CHEBI:57945"/>
        <dbReference type="ChEBI" id="CHEBI:67139"/>
        <dbReference type="EC" id="1.17.1.8"/>
    </reaction>
</comment>
<comment type="catalytic activity">
    <reaction evidence="1">
        <text>(S)-2,3,4,5-tetrahydrodipicolinate + NADP(+) + H2O = (2S,4S)-4-hydroxy-2,3,4,5-tetrahydrodipicolinate + NADPH + H(+)</text>
        <dbReference type="Rhea" id="RHEA:35331"/>
        <dbReference type="ChEBI" id="CHEBI:15377"/>
        <dbReference type="ChEBI" id="CHEBI:15378"/>
        <dbReference type="ChEBI" id="CHEBI:16845"/>
        <dbReference type="ChEBI" id="CHEBI:57783"/>
        <dbReference type="ChEBI" id="CHEBI:58349"/>
        <dbReference type="ChEBI" id="CHEBI:67139"/>
        <dbReference type="EC" id="1.17.1.8"/>
    </reaction>
</comment>
<comment type="pathway">
    <text evidence="1">Amino-acid biosynthesis; L-lysine biosynthesis via DAP pathway; (S)-tetrahydrodipicolinate from L-aspartate: step 4/4.</text>
</comment>
<comment type="subcellular location">
    <subcellularLocation>
        <location evidence="1">Cytoplasm</location>
    </subcellularLocation>
</comment>
<comment type="similarity">
    <text evidence="1">Belongs to the DapB family.</text>
</comment>
<comment type="caution">
    <text evidence="2">Was originally thought to be a dihydrodipicolinate reductase (DHDPR), catalyzing the conversion of dihydrodipicolinate to tetrahydrodipicolinate. However, it was shown in E.coli that the substrate of the enzymatic reaction is not dihydrodipicolinate (DHDP) but in fact (2S,4S)-4-hydroxy-2,3,4,5-tetrahydrodipicolinic acid (HTPA), the product released by the DapA-catalyzed reaction.</text>
</comment>
<proteinExistence type="inferred from homology"/>
<accession>Q3AIK8</accession>
<keyword id="KW-0028">Amino-acid biosynthesis</keyword>
<keyword id="KW-0963">Cytoplasm</keyword>
<keyword id="KW-0220">Diaminopimelate biosynthesis</keyword>
<keyword id="KW-0457">Lysine biosynthesis</keyword>
<keyword id="KW-0520">NAD</keyword>
<keyword id="KW-0521">NADP</keyword>
<keyword id="KW-0560">Oxidoreductase</keyword>
<protein>
    <recommendedName>
        <fullName evidence="1">4-hydroxy-tetrahydrodipicolinate reductase</fullName>
        <shortName evidence="1">HTPA reductase</shortName>
        <ecNumber evidence="1">1.17.1.8</ecNumber>
    </recommendedName>
</protein>